<dbReference type="EMBL" id="AK000626">
    <property type="protein sequence ID" value="BAA91293.1"/>
    <property type="molecule type" value="mRNA"/>
</dbReference>
<dbReference type="EMBL" id="AC096536">
    <property type="status" value="NOT_ANNOTATED_CDS"/>
    <property type="molecule type" value="Genomic_DNA"/>
</dbReference>
<dbReference type="EMBL" id="AL139244">
    <property type="status" value="NOT_ANNOTATED_CDS"/>
    <property type="molecule type" value="Genomic_DNA"/>
</dbReference>
<dbReference type="CCDS" id="CCDS44152.1">
    <molecule id="Q5TAA0-1"/>
</dbReference>
<dbReference type="CCDS" id="CCDS598.1">
    <molecule id="Q5TAA0-2"/>
</dbReference>
<dbReference type="RefSeq" id="NP_001107580.1">
    <molecule id="Q5TAA0-1"/>
    <property type="nucleotide sequence ID" value="NM_001114108.2"/>
</dbReference>
<dbReference type="RefSeq" id="NP_060374.2">
    <molecule id="Q5TAA0-2"/>
    <property type="nucleotide sequence ID" value="NM_017904.4"/>
</dbReference>
<dbReference type="BioGRID" id="120333">
    <property type="interactions" value="1"/>
</dbReference>
<dbReference type="FunCoup" id="Q5TAA0">
    <property type="interactions" value="13"/>
</dbReference>
<dbReference type="STRING" id="9606.ENSP00000360323"/>
<dbReference type="GlyGen" id="Q5TAA0">
    <property type="glycosylation" value="1 site, 1 O-linked glycan (1 site)"/>
</dbReference>
<dbReference type="iPTMnet" id="Q5TAA0"/>
<dbReference type="PhosphoSitePlus" id="Q5TAA0"/>
<dbReference type="BioMuta" id="TTC22"/>
<dbReference type="DMDM" id="74745799"/>
<dbReference type="jPOST" id="Q5TAA0"/>
<dbReference type="MassIVE" id="Q5TAA0"/>
<dbReference type="PaxDb" id="9606-ENSP00000360323"/>
<dbReference type="PeptideAtlas" id="Q5TAA0"/>
<dbReference type="ProteomicsDB" id="64839">
    <molecule id="Q5TAA0-1"/>
</dbReference>
<dbReference type="ProteomicsDB" id="64840">
    <molecule id="Q5TAA0-2"/>
</dbReference>
<dbReference type="Antibodypedia" id="33220">
    <property type="antibodies" value="23 antibodies from 13 providers"/>
</dbReference>
<dbReference type="DNASU" id="55001"/>
<dbReference type="Ensembl" id="ENST00000371274.8">
    <molecule id="Q5TAA0-2"/>
    <property type="protein sequence ID" value="ENSP00000360321.4"/>
    <property type="gene ID" value="ENSG00000006555.11"/>
</dbReference>
<dbReference type="Ensembl" id="ENST00000371276.9">
    <molecule id="Q5TAA0-1"/>
    <property type="protein sequence ID" value="ENSP00000360323.4"/>
    <property type="gene ID" value="ENSG00000006555.11"/>
</dbReference>
<dbReference type="GeneID" id="55001"/>
<dbReference type="KEGG" id="hsa:55001"/>
<dbReference type="MANE-Select" id="ENST00000371276.9">
    <property type="protein sequence ID" value="ENSP00000360323.4"/>
    <property type="RefSeq nucleotide sequence ID" value="NM_001114108.2"/>
    <property type="RefSeq protein sequence ID" value="NP_001107580.1"/>
</dbReference>
<dbReference type="UCSC" id="uc001cxz.5">
    <molecule id="Q5TAA0-1"/>
    <property type="organism name" value="human"/>
</dbReference>
<dbReference type="AGR" id="HGNC:26067"/>
<dbReference type="CTD" id="55001"/>
<dbReference type="DisGeNET" id="55001"/>
<dbReference type="GeneCards" id="TTC22"/>
<dbReference type="HGNC" id="HGNC:26067">
    <property type="gene designation" value="TTC22"/>
</dbReference>
<dbReference type="HPA" id="ENSG00000006555">
    <property type="expression patterns" value="Tissue enhanced (esophagus, vagina)"/>
</dbReference>
<dbReference type="neXtProt" id="NX_Q5TAA0"/>
<dbReference type="OpenTargets" id="ENSG00000006555"/>
<dbReference type="PharmGKB" id="PA142670674"/>
<dbReference type="VEuPathDB" id="HostDB:ENSG00000006555"/>
<dbReference type="eggNOG" id="ENOG502QPNX">
    <property type="taxonomic scope" value="Eukaryota"/>
</dbReference>
<dbReference type="GeneTree" id="ENSGT00390000007658"/>
<dbReference type="HOGENOM" id="CLU_034944_1_0_1"/>
<dbReference type="InParanoid" id="Q5TAA0"/>
<dbReference type="OMA" id="HHRALAW"/>
<dbReference type="OrthoDB" id="9976543at2759"/>
<dbReference type="PAN-GO" id="Q5TAA0">
    <property type="GO annotations" value="0 GO annotations based on evolutionary models"/>
</dbReference>
<dbReference type="PhylomeDB" id="Q5TAA0"/>
<dbReference type="TreeFam" id="TF331828"/>
<dbReference type="PathwayCommons" id="Q5TAA0"/>
<dbReference type="BioGRID-ORCS" id="55001">
    <property type="hits" value="12 hits in 1140 CRISPR screens"/>
</dbReference>
<dbReference type="GenomeRNAi" id="55001"/>
<dbReference type="Pharos" id="Q5TAA0">
    <property type="development level" value="Tdark"/>
</dbReference>
<dbReference type="PRO" id="PR:Q5TAA0"/>
<dbReference type="Proteomes" id="UP000005640">
    <property type="component" value="Chromosome 1"/>
</dbReference>
<dbReference type="RNAct" id="Q5TAA0">
    <property type="molecule type" value="protein"/>
</dbReference>
<dbReference type="Bgee" id="ENSG00000006555">
    <property type="expression patterns" value="Expressed in esophagus squamous epithelium and 142 other cell types or tissues"/>
</dbReference>
<dbReference type="ExpressionAtlas" id="Q5TAA0">
    <property type="expression patterns" value="baseline and differential"/>
</dbReference>
<dbReference type="Gene3D" id="1.25.40.10">
    <property type="entry name" value="Tetratricopeptide repeat domain"/>
    <property type="match status" value="2"/>
</dbReference>
<dbReference type="InterPro" id="IPR011990">
    <property type="entry name" value="TPR-like_helical_dom_sf"/>
</dbReference>
<dbReference type="InterPro" id="IPR019734">
    <property type="entry name" value="TPR_rpt"/>
</dbReference>
<dbReference type="InterPro" id="IPR042342">
    <property type="entry name" value="TTC22"/>
</dbReference>
<dbReference type="PANTHER" id="PTHR16253">
    <property type="entry name" value="TETRATRICOPEPTIDE REPEAT PROTEIN 22"/>
    <property type="match status" value="1"/>
</dbReference>
<dbReference type="PANTHER" id="PTHR16253:SF0">
    <property type="entry name" value="TETRATRICOPEPTIDE REPEAT PROTEIN 22"/>
    <property type="match status" value="1"/>
</dbReference>
<dbReference type="Pfam" id="PF13181">
    <property type="entry name" value="TPR_8"/>
    <property type="match status" value="1"/>
</dbReference>
<dbReference type="SMART" id="SM00028">
    <property type="entry name" value="TPR"/>
    <property type="match status" value="3"/>
</dbReference>
<dbReference type="SUPFAM" id="SSF48452">
    <property type="entry name" value="TPR-like"/>
    <property type="match status" value="2"/>
</dbReference>
<reference key="1">
    <citation type="journal article" date="2004" name="Nat. Genet.">
        <title>Complete sequencing and characterization of 21,243 full-length human cDNAs.</title>
        <authorList>
            <person name="Ota T."/>
            <person name="Suzuki Y."/>
            <person name="Nishikawa T."/>
            <person name="Otsuki T."/>
            <person name="Sugiyama T."/>
            <person name="Irie R."/>
            <person name="Wakamatsu A."/>
            <person name="Hayashi K."/>
            <person name="Sato H."/>
            <person name="Nagai K."/>
            <person name="Kimura K."/>
            <person name="Makita H."/>
            <person name="Sekine M."/>
            <person name="Obayashi M."/>
            <person name="Nishi T."/>
            <person name="Shibahara T."/>
            <person name="Tanaka T."/>
            <person name="Ishii S."/>
            <person name="Yamamoto J."/>
            <person name="Saito K."/>
            <person name="Kawai Y."/>
            <person name="Isono Y."/>
            <person name="Nakamura Y."/>
            <person name="Nagahari K."/>
            <person name="Murakami K."/>
            <person name="Yasuda T."/>
            <person name="Iwayanagi T."/>
            <person name="Wagatsuma M."/>
            <person name="Shiratori A."/>
            <person name="Sudo H."/>
            <person name="Hosoiri T."/>
            <person name="Kaku Y."/>
            <person name="Kodaira H."/>
            <person name="Kondo H."/>
            <person name="Sugawara M."/>
            <person name="Takahashi M."/>
            <person name="Kanda K."/>
            <person name="Yokoi T."/>
            <person name="Furuya T."/>
            <person name="Kikkawa E."/>
            <person name="Omura Y."/>
            <person name="Abe K."/>
            <person name="Kamihara K."/>
            <person name="Katsuta N."/>
            <person name="Sato K."/>
            <person name="Tanikawa M."/>
            <person name="Yamazaki M."/>
            <person name="Ninomiya K."/>
            <person name="Ishibashi T."/>
            <person name="Yamashita H."/>
            <person name="Murakawa K."/>
            <person name="Fujimori K."/>
            <person name="Tanai H."/>
            <person name="Kimata M."/>
            <person name="Watanabe M."/>
            <person name="Hiraoka S."/>
            <person name="Chiba Y."/>
            <person name="Ishida S."/>
            <person name="Ono Y."/>
            <person name="Takiguchi S."/>
            <person name="Watanabe S."/>
            <person name="Yosida M."/>
            <person name="Hotuta T."/>
            <person name="Kusano J."/>
            <person name="Kanehori K."/>
            <person name="Takahashi-Fujii A."/>
            <person name="Hara H."/>
            <person name="Tanase T.-O."/>
            <person name="Nomura Y."/>
            <person name="Togiya S."/>
            <person name="Komai F."/>
            <person name="Hara R."/>
            <person name="Takeuchi K."/>
            <person name="Arita M."/>
            <person name="Imose N."/>
            <person name="Musashino K."/>
            <person name="Yuuki H."/>
            <person name="Oshima A."/>
            <person name="Sasaki N."/>
            <person name="Aotsuka S."/>
            <person name="Yoshikawa Y."/>
            <person name="Matsunawa H."/>
            <person name="Ichihara T."/>
            <person name="Shiohata N."/>
            <person name="Sano S."/>
            <person name="Moriya S."/>
            <person name="Momiyama H."/>
            <person name="Satoh N."/>
            <person name="Takami S."/>
            <person name="Terashima Y."/>
            <person name="Suzuki O."/>
            <person name="Nakagawa S."/>
            <person name="Senoh A."/>
            <person name="Mizoguchi H."/>
            <person name="Goto Y."/>
            <person name="Shimizu F."/>
            <person name="Wakebe H."/>
            <person name="Hishigaki H."/>
            <person name="Watanabe T."/>
            <person name="Sugiyama A."/>
            <person name="Takemoto M."/>
            <person name="Kawakami B."/>
            <person name="Yamazaki M."/>
            <person name="Watanabe K."/>
            <person name="Kumagai A."/>
            <person name="Itakura S."/>
            <person name="Fukuzumi Y."/>
            <person name="Fujimori Y."/>
            <person name="Komiyama M."/>
            <person name="Tashiro H."/>
            <person name="Tanigami A."/>
            <person name="Fujiwara T."/>
            <person name="Ono T."/>
            <person name="Yamada K."/>
            <person name="Fujii Y."/>
            <person name="Ozaki K."/>
            <person name="Hirao M."/>
            <person name="Ohmori Y."/>
            <person name="Kawabata A."/>
            <person name="Hikiji T."/>
            <person name="Kobatake N."/>
            <person name="Inagaki H."/>
            <person name="Ikema Y."/>
            <person name="Okamoto S."/>
            <person name="Okitani R."/>
            <person name="Kawakami T."/>
            <person name="Noguchi S."/>
            <person name="Itoh T."/>
            <person name="Shigeta K."/>
            <person name="Senba T."/>
            <person name="Matsumura K."/>
            <person name="Nakajima Y."/>
            <person name="Mizuno T."/>
            <person name="Morinaga M."/>
            <person name="Sasaki M."/>
            <person name="Togashi T."/>
            <person name="Oyama M."/>
            <person name="Hata H."/>
            <person name="Watanabe M."/>
            <person name="Komatsu T."/>
            <person name="Mizushima-Sugano J."/>
            <person name="Satoh T."/>
            <person name="Shirai Y."/>
            <person name="Takahashi Y."/>
            <person name="Nakagawa K."/>
            <person name="Okumura K."/>
            <person name="Nagase T."/>
            <person name="Nomura N."/>
            <person name="Kikuchi H."/>
            <person name="Masuho Y."/>
            <person name="Yamashita R."/>
            <person name="Nakai K."/>
            <person name="Yada T."/>
            <person name="Nakamura Y."/>
            <person name="Ohara O."/>
            <person name="Isogai T."/>
            <person name="Sugano S."/>
        </authorList>
    </citation>
    <scope>NUCLEOTIDE SEQUENCE [LARGE SCALE MRNA] (ISOFORM 2)</scope>
    <source>
        <tissue>Carcinoma</tissue>
    </source>
</reference>
<reference key="2">
    <citation type="journal article" date="2006" name="Nature">
        <title>The DNA sequence and biological annotation of human chromosome 1.</title>
        <authorList>
            <person name="Gregory S.G."/>
            <person name="Barlow K.F."/>
            <person name="McLay K.E."/>
            <person name="Kaul R."/>
            <person name="Swarbreck D."/>
            <person name="Dunham A."/>
            <person name="Scott C.E."/>
            <person name="Howe K.L."/>
            <person name="Woodfine K."/>
            <person name="Spencer C.C.A."/>
            <person name="Jones M.C."/>
            <person name="Gillson C."/>
            <person name="Searle S."/>
            <person name="Zhou Y."/>
            <person name="Kokocinski F."/>
            <person name="McDonald L."/>
            <person name="Evans R."/>
            <person name="Phillips K."/>
            <person name="Atkinson A."/>
            <person name="Cooper R."/>
            <person name="Jones C."/>
            <person name="Hall R.E."/>
            <person name="Andrews T.D."/>
            <person name="Lloyd C."/>
            <person name="Ainscough R."/>
            <person name="Almeida J.P."/>
            <person name="Ambrose K.D."/>
            <person name="Anderson F."/>
            <person name="Andrew R.W."/>
            <person name="Ashwell R.I.S."/>
            <person name="Aubin K."/>
            <person name="Babbage A.K."/>
            <person name="Bagguley C.L."/>
            <person name="Bailey J."/>
            <person name="Beasley H."/>
            <person name="Bethel G."/>
            <person name="Bird C.P."/>
            <person name="Bray-Allen S."/>
            <person name="Brown J.Y."/>
            <person name="Brown A.J."/>
            <person name="Buckley D."/>
            <person name="Burton J."/>
            <person name="Bye J."/>
            <person name="Carder C."/>
            <person name="Chapman J.C."/>
            <person name="Clark S.Y."/>
            <person name="Clarke G."/>
            <person name="Clee C."/>
            <person name="Cobley V."/>
            <person name="Collier R.E."/>
            <person name="Corby N."/>
            <person name="Coville G.J."/>
            <person name="Davies J."/>
            <person name="Deadman R."/>
            <person name="Dunn M."/>
            <person name="Earthrowl M."/>
            <person name="Ellington A.G."/>
            <person name="Errington H."/>
            <person name="Frankish A."/>
            <person name="Frankland J."/>
            <person name="French L."/>
            <person name="Garner P."/>
            <person name="Garnett J."/>
            <person name="Gay L."/>
            <person name="Ghori M.R.J."/>
            <person name="Gibson R."/>
            <person name="Gilby L.M."/>
            <person name="Gillett W."/>
            <person name="Glithero R.J."/>
            <person name="Grafham D.V."/>
            <person name="Griffiths C."/>
            <person name="Griffiths-Jones S."/>
            <person name="Grocock R."/>
            <person name="Hammond S."/>
            <person name="Harrison E.S.I."/>
            <person name="Hart E."/>
            <person name="Haugen E."/>
            <person name="Heath P.D."/>
            <person name="Holmes S."/>
            <person name="Holt K."/>
            <person name="Howden P.J."/>
            <person name="Hunt A.R."/>
            <person name="Hunt S.E."/>
            <person name="Hunter G."/>
            <person name="Isherwood J."/>
            <person name="James R."/>
            <person name="Johnson C."/>
            <person name="Johnson D."/>
            <person name="Joy A."/>
            <person name="Kay M."/>
            <person name="Kershaw J.K."/>
            <person name="Kibukawa M."/>
            <person name="Kimberley A.M."/>
            <person name="King A."/>
            <person name="Knights A.J."/>
            <person name="Lad H."/>
            <person name="Laird G."/>
            <person name="Lawlor S."/>
            <person name="Leongamornlert D.A."/>
            <person name="Lloyd D.M."/>
            <person name="Loveland J."/>
            <person name="Lovell J."/>
            <person name="Lush M.J."/>
            <person name="Lyne R."/>
            <person name="Martin S."/>
            <person name="Mashreghi-Mohammadi M."/>
            <person name="Matthews L."/>
            <person name="Matthews N.S.W."/>
            <person name="McLaren S."/>
            <person name="Milne S."/>
            <person name="Mistry S."/>
            <person name="Moore M.J.F."/>
            <person name="Nickerson T."/>
            <person name="O'Dell C.N."/>
            <person name="Oliver K."/>
            <person name="Palmeiri A."/>
            <person name="Palmer S.A."/>
            <person name="Parker A."/>
            <person name="Patel D."/>
            <person name="Pearce A.V."/>
            <person name="Peck A.I."/>
            <person name="Pelan S."/>
            <person name="Phelps K."/>
            <person name="Phillimore B.J."/>
            <person name="Plumb R."/>
            <person name="Rajan J."/>
            <person name="Raymond C."/>
            <person name="Rouse G."/>
            <person name="Saenphimmachak C."/>
            <person name="Sehra H.K."/>
            <person name="Sheridan E."/>
            <person name="Shownkeen R."/>
            <person name="Sims S."/>
            <person name="Skuce C.D."/>
            <person name="Smith M."/>
            <person name="Steward C."/>
            <person name="Subramanian S."/>
            <person name="Sycamore N."/>
            <person name="Tracey A."/>
            <person name="Tromans A."/>
            <person name="Van Helmond Z."/>
            <person name="Wall M."/>
            <person name="Wallis J.M."/>
            <person name="White S."/>
            <person name="Whitehead S.L."/>
            <person name="Wilkinson J.E."/>
            <person name="Willey D.L."/>
            <person name="Williams H."/>
            <person name="Wilming L."/>
            <person name="Wray P.W."/>
            <person name="Wu Z."/>
            <person name="Coulson A."/>
            <person name="Vaudin M."/>
            <person name="Sulston J.E."/>
            <person name="Durbin R.M."/>
            <person name="Hubbard T."/>
            <person name="Wooster R."/>
            <person name="Dunham I."/>
            <person name="Carter N.P."/>
            <person name="McVean G."/>
            <person name="Ross M.T."/>
            <person name="Harrow J."/>
            <person name="Olson M.V."/>
            <person name="Beck S."/>
            <person name="Rogers J."/>
            <person name="Bentley D.R."/>
        </authorList>
    </citation>
    <scope>NUCLEOTIDE SEQUENCE [LARGE SCALE GENOMIC DNA]</scope>
</reference>
<keyword id="KW-0025">Alternative splicing</keyword>
<keyword id="KW-1267">Proteomics identification</keyword>
<keyword id="KW-1185">Reference proteome</keyword>
<keyword id="KW-0677">Repeat</keyword>
<keyword id="KW-0802">TPR repeat</keyword>
<gene>
    <name type="primary">TTC22</name>
</gene>
<feature type="chain" id="PRO_0000263098" description="Tetratricopeptide repeat protein 22">
    <location>
        <begin position="1"/>
        <end position="569"/>
    </location>
</feature>
<feature type="repeat" description="TPR 1">
    <location>
        <begin position="66"/>
        <end position="99"/>
    </location>
</feature>
<feature type="repeat" description="TPR 2">
    <location>
        <begin position="101"/>
        <end position="133"/>
    </location>
</feature>
<feature type="repeat" description="TPR 3">
    <location>
        <begin position="203"/>
        <end position="237"/>
    </location>
</feature>
<feature type="repeat" description="TPR 4">
    <location>
        <begin position="260"/>
        <end position="294"/>
    </location>
</feature>
<feature type="repeat" description="TPR 5">
    <location>
        <begin position="295"/>
        <end position="328"/>
    </location>
</feature>
<feature type="repeat" description="TPR 6">
    <location>
        <begin position="383"/>
        <end position="418"/>
    </location>
</feature>
<feature type="repeat" description="TPR 7">
    <location>
        <begin position="432"/>
        <end position="465"/>
    </location>
</feature>
<feature type="splice variant" id="VSP_021859" description="In isoform 2." evidence="1">
    <original>IHIRAYLHDLKRAKMGLGGMPDRNHLACAKAD</original>
    <variation>RRGLTMLPRLVSNSWAQAVLPPRPPKVLEFQV</variation>
    <location>
        <begin position="341"/>
        <end position="372"/>
    </location>
</feature>
<feature type="splice variant" id="VSP_021860" description="In isoform 2." evidence="1">
    <location>
        <begin position="373"/>
        <end position="569"/>
    </location>
</feature>
<feature type="sequence variant" id="VAR_029585" description="In dbSNP:rs671108.">
    <original>L</original>
    <variation>V</variation>
    <location>
        <position position="14"/>
    </location>
</feature>
<feature type="sequence conflict" description="In Ref. 1; BAA91293." evidence="2" ref="1">
    <original>R</original>
    <variation>H</variation>
    <location>
        <position position="229"/>
    </location>
</feature>
<feature type="sequence conflict" description="In Ref. 1; BAA91293." evidence="2" ref="1">
    <original>V</original>
    <variation>A</variation>
    <location>
        <position position="324"/>
    </location>
</feature>
<evidence type="ECO:0000303" key="1">
    <source>
    </source>
</evidence>
<evidence type="ECO:0000305" key="2"/>
<proteinExistence type="evidence at protein level"/>
<name>TTC22_HUMAN</name>
<accession>Q5TAA0</accession>
<accession>Q9NWT4</accession>
<comment type="alternative products">
    <event type="alternative splicing"/>
    <isoform>
        <id>Q5TAA0-1</id>
        <name>1</name>
        <sequence type="displayed"/>
    </isoform>
    <isoform>
        <id>Q5TAA0-2</id>
        <name>2</name>
        <sequence type="described" ref="VSP_021859 VSP_021860"/>
    </isoform>
</comment>
<organism>
    <name type="scientific">Homo sapiens</name>
    <name type="common">Human</name>
    <dbReference type="NCBI Taxonomy" id="9606"/>
    <lineage>
        <taxon>Eukaryota</taxon>
        <taxon>Metazoa</taxon>
        <taxon>Chordata</taxon>
        <taxon>Craniata</taxon>
        <taxon>Vertebrata</taxon>
        <taxon>Euteleostomi</taxon>
        <taxon>Mammalia</taxon>
        <taxon>Eutheria</taxon>
        <taxon>Euarchontoglires</taxon>
        <taxon>Primates</taxon>
        <taxon>Haplorrhini</taxon>
        <taxon>Catarrhini</taxon>
        <taxon>Hominidae</taxon>
        <taxon>Homo</taxon>
    </lineage>
</organism>
<protein>
    <recommendedName>
        <fullName>Tetratricopeptide repeat protein 22</fullName>
        <shortName>TPR repeat protein 22</shortName>
    </recommendedName>
</protein>
<sequence length="569" mass="63361">MAELEAVADDLDALIDDLDYLPGHFHLEMQLNFEPRSPAPQRARDLKLQREGLRQELQLAAAPQRPAVRHLLGAFAFYLEELDEARECFLEVAHEHPGNLNAWANLAHVYGRLGQEEEEEACAARLADLMGLAEEPEAAGDPQLRAARCLAEQGYAHGFDVGCASPEERARGLAAGIALYDKALGYGQQIPMEEKRGWYFTMATLYIRLDGIFLELGSEEQKRLPAFNRTLALLRQVLKSEDPRHRALAWCYLGMLLERKDTFSTTPMGVHDCGYSGTDPLDCFGKAIEIAKNQPPILNRLAKIFYFLGKQDMAIGTCNMALDVLRDPELNWQAYCTRAKIHIRAYLHDLKRAKMGLGGMPDRNHLACAKADLEEVVRVCPGFKAYLDIGQVYYYMGVDAVQELLAVDEAALNQALVFLAKAGESELGATLPELQLLRGKCLRIKGEDANAAACFKRAVELDDAGSSHTDGFGCLLEALLAQWSQAQLSDGELGREVDAWLRRAQDKYPAARLRQELQRVWRGHTDEVLGLARALVAQGRPALVRLLFETMEREGEGASAPRDRRAVSF</sequence>